<keyword id="KW-0067">ATP-binding</keyword>
<keyword id="KW-0963">Cytoplasm</keyword>
<keyword id="KW-0418">Kinase</keyword>
<keyword id="KW-0460">Magnesium</keyword>
<keyword id="KW-0479">Metal-binding</keyword>
<keyword id="KW-0546">Nucleotide metabolism</keyword>
<keyword id="KW-0547">Nucleotide-binding</keyword>
<keyword id="KW-0597">Phosphoprotein</keyword>
<keyword id="KW-0808">Transferase</keyword>
<accession>A2S299</accession>
<dbReference type="EC" id="2.7.4.6" evidence="1"/>
<dbReference type="EMBL" id="CP000546">
    <property type="protein sequence ID" value="ABN01762.1"/>
    <property type="molecule type" value="Genomic_DNA"/>
</dbReference>
<dbReference type="RefSeq" id="WP_004193561.1">
    <property type="nucleotide sequence ID" value="NC_008836.1"/>
</dbReference>
<dbReference type="SMR" id="A2S299"/>
<dbReference type="GeneID" id="92979081"/>
<dbReference type="KEGG" id="bml:BMA10229_A0059"/>
<dbReference type="HOGENOM" id="CLU_060216_8_1_4"/>
<dbReference type="Proteomes" id="UP000002283">
    <property type="component" value="Chromosome I"/>
</dbReference>
<dbReference type="GO" id="GO:0005737">
    <property type="term" value="C:cytoplasm"/>
    <property type="evidence" value="ECO:0007669"/>
    <property type="project" value="UniProtKB-SubCell"/>
</dbReference>
<dbReference type="GO" id="GO:0005524">
    <property type="term" value="F:ATP binding"/>
    <property type="evidence" value="ECO:0007669"/>
    <property type="project" value="UniProtKB-UniRule"/>
</dbReference>
<dbReference type="GO" id="GO:0046872">
    <property type="term" value="F:metal ion binding"/>
    <property type="evidence" value="ECO:0007669"/>
    <property type="project" value="UniProtKB-KW"/>
</dbReference>
<dbReference type="GO" id="GO:0004550">
    <property type="term" value="F:nucleoside diphosphate kinase activity"/>
    <property type="evidence" value="ECO:0007669"/>
    <property type="project" value="UniProtKB-UniRule"/>
</dbReference>
<dbReference type="GO" id="GO:0006241">
    <property type="term" value="P:CTP biosynthetic process"/>
    <property type="evidence" value="ECO:0007669"/>
    <property type="project" value="UniProtKB-UniRule"/>
</dbReference>
<dbReference type="GO" id="GO:0006183">
    <property type="term" value="P:GTP biosynthetic process"/>
    <property type="evidence" value="ECO:0007669"/>
    <property type="project" value="UniProtKB-UniRule"/>
</dbReference>
<dbReference type="GO" id="GO:0006228">
    <property type="term" value="P:UTP biosynthetic process"/>
    <property type="evidence" value="ECO:0007669"/>
    <property type="project" value="UniProtKB-UniRule"/>
</dbReference>
<dbReference type="CDD" id="cd04413">
    <property type="entry name" value="NDPk_I"/>
    <property type="match status" value="1"/>
</dbReference>
<dbReference type="FunFam" id="3.30.70.141:FF:000001">
    <property type="entry name" value="Nucleoside diphosphate kinase"/>
    <property type="match status" value="1"/>
</dbReference>
<dbReference type="Gene3D" id="3.30.70.141">
    <property type="entry name" value="Nucleoside diphosphate kinase-like domain"/>
    <property type="match status" value="1"/>
</dbReference>
<dbReference type="HAMAP" id="MF_00451">
    <property type="entry name" value="NDP_kinase"/>
    <property type="match status" value="1"/>
</dbReference>
<dbReference type="InterPro" id="IPR034907">
    <property type="entry name" value="NDK-like_dom"/>
</dbReference>
<dbReference type="InterPro" id="IPR036850">
    <property type="entry name" value="NDK-like_dom_sf"/>
</dbReference>
<dbReference type="InterPro" id="IPR001564">
    <property type="entry name" value="Nucleoside_diP_kinase"/>
</dbReference>
<dbReference type="InterPro" id="IPR023005">
    <property type="entry name" value="Nucleoside_diP_kinase_AS"/>
</dbReference>
<dbReference type="NCBIfam" id="NF001908">
    <property type="entry name" value="PRK00668.1"/>
    <property type="match status" value="1"/>
</dbReference>
<dbReference type="PANTHER" id="PTHR46161">
    <property type="entry name" value="NUCLEOSIDE DIPHOSPHATE KINASE"/>
    <property type="match status" value="1"/>
</dbReference>
<dbReference type="PANTHER" id="PTHR46161:SF3">
    <property type="entry name" value="NUCLEOSIDE DIPHOSPHATE KINASE DDB_G0292928-RELATED"/>
    <property type="match status" value="1"/>
</dbReference>
<dbReference type="Pfam" id="PF00334">
    <property type="entry name" value="NDK"/>
    <property type="match status" value="1"/>
</dbReference>
<dbReference type="PRINTS" id="PR01243">
    <property type="entry name" value="NUCDPKINASE"/>
</dbReference>
<dbReference type="SMART" id="SM00562">
    <property type="entry name" value="NDK"/>
    <property type="match status" value="1"/>
</dbReference>
<dbReference type="SUPFAM" id="SSF54919">
    <property type="entry name" value="Nucleoside diphosphate kinase, NDK"/>
    <property type="match status" value="1"/>
</dbReference>
<dbReference type="PROSITE" id="PS00469">
    <property type="entry name" value="NDPK"/>
    <property type="match status" value="1"/>
</dbReference>
<dbReference type="PROSITE" id="PS51374">
    <property type="entry name" value="NDPK_LIKE"/>
    <property type="match status" value="1"/>
</dbReference>
<evidence type="ECO:0000255" key="1">
    <source>
        <dbReference type="HAMAP-Rule" id="MF_00451"/>
    </source>
</evidence>
<feature type="chain" id="PRO_1000026215" description="Nucleoside diphosphate kinase">
    <location>
        <begin position="1"/>
        <end position="141"/>
    </location>
</feature>
<feature type="active site" description="Pros-phosphohistidine intermediate" evidence="1">
    <location>
        <position position="117"/>
    </location>
</feature>
<feature type="binding site" evidence="1">
    <location>
        <position position="11"/>
    </location>
    <ligand>
        <name>ATP</name>
        <dbReference type="ChEBI" id="CHEBI:30616"/>
    </ligand>
</feature>
<feature type="binding site" evidence="1">
    <location>
        <position position="59"/>
    </location>
    <ligand>
        <name>ATP</name>
        <dbReference type="ChEBI" id="CHEBI:30616"/>
    </ligand>
</feature>
<feature type="binding site" evidence="1">
    <location>
        <position position="87"/>
    </location>
    <ligand>
        <name>ATP</name>
        <dbReference type="ChEBI" id="CHEBI:30616"/>
    </ligand>
</feature>
<feature type="binding site" evidence="1">
    <location>
        <position position="93"/>
    </location>
    <ligand>
        <name>ATP</name>
        <dbReference type="ChEBI" id="CHEBI:30616"/>
    </ligand>
</feature>
<feature type="binding site" evidence="1">
    <location>
        <position position="104"/>
    </location>
    <ligand>
        <name>ATP</name>
        <dbReference type="ChEBI" id="CHEBI:30616"/>
    </ligand>
</feature>
<feature type="binding site" evidence="1">
    <location>
        <position position="114"/>
    </location>
    <ligand>
        <name>ATP</name>
        <dbReference type="ChEBI" id="CHEBI:30616"/>
    </ligand>
</feature>
<gene>
    <name evidence="1" type="primary">ndk</name>
    <name type="ordered locus">BMA10229_A0059</name>
</gene>
<organism>
    <name type="scientific">Burkholderia mallei (strain NCTC 10229)</name>
    <dbReference type="NCBI Taxonomy" id="412022"/>
    <lineage>
        <taxon>Bacteria</taxon>
        <taxon>Pseudomonadati</taxon>
        <taxon>Pseudomonadota</taxon>
        <taxon>Betaproteobacteria</taxon>
        <taxon>Burkholderiales</taxon>
        <taxon>Burkholderiaceae</taxon>
        <taxon>Burkholderia</taxon>
        <taxon>pseudomallei group</taxon>
    </lineage>
</organism>
<reference key="1">
    <citation type="journal article" date="2010" name="Genome Biol. Evol.">
        <title>Continuing evolution of Burkholderia mallei through genome reduction and large-scale rearrangements.</title>
        <authorList>
            <person name="Losada L."/>
            <person name="Ronning C.M."/>
            <person name="DeShazer D."/>
            <person name="Woods D."/>
            <person name="Fedorova N."/>
            <person name="Kim H.S."/>
            <person name="Shabalina S.A."/>
            <person name="Pearson T.R."/>
            <person name="Brinkac L."/>
            <person name="Tan P."/>
            <person name="Nandi T."/>
            <person name="Crabtree J."/>
            <person name="Badger J."/>
            <person name="Beckstrom-Sternberg S."/>
            <person name="Saqib M."/>
            <person name="Schutzer S.E."/>
            <person name="Keim P."/>
            <person name="Nierman W.C."/>
        </authorList>
    </citation>
    <scope>NUCLEOTIDE SEQUENCE [LARGE SCALE GENOMIC DNA]</scope>
    <source>
        <strain>NCTC 10229</strain>
    </source>
</reference>
<protein>
    <recommendedName>
        <fullName evidence="1">Nucleoside diphosphate kinase</fullName>
        <shortName evidence="1">NDK</shortName>
        <shortName evidence="1">NDP kinase</shortName>
        <ecNumber evidence="1">2.7.4.6</ecNumber>
    </recommendedName>
    <alternativeName>
        <fullName evidence="1">Nucleoside-2-P kinase</fullName>
    </alternativeName>
</protein>
<sequence length="141" mass="15562">MALERTLSIIKPDAVAKNVIGQIYSRFENAGLKIVAARMAHLSRADAEKFYAVHAERPFFKDLVDFMISGPVMIQVLEGEDAILKNRDLMGATDPKKAEKGTIRADFADSIDANAVHGSDAPETARAEVAFFFPEMNVYSR</sequence>
<name>NDK_BURM9</name>
<comment type="function">
    <text evidence="1">Major role in the synthesis of nucleoside triphosphates other than ATP. The ATP gamma phosphate is transferred to the NDP beta phosphate via a ping-pong mechanism, using a phosphorylated active-site intermediate.</text>
</comment>
<comment type="catalytic activity">
    <reaction evidence="1">
        <text>a 2'-deoxyribonucleoside 5'-diphosphate + ATP = a 2'-deoxyribonucleoside 5'-triphosphate + ADP</text>
        <dbReference type="Rhea" id="RHEA:44640"/>
        <dbReference type="ChEBI" id="CHEBI:30616"/>
        <dbReference type="ChEBI" id="CHEBI:61560"/>
        <dbReference type="ChEBI" id="CHEBI:73316"/>
        <dbReference type="ChEBI" id="CHEBI:456216"/>
        <dbReference type="EC" id="2.7.4.6"/>
    </reaction>
</comment>
<comment type="catalytic activity">
    <reaction evidence="1">
        <text>a ribonucleoside 5'-diphosphate + ATP = a ribonucleoside 5'-triphosphate + ADP</text>
        <dbReference type="Rhea" id="RHEA:18113"/>
        <dbReference type="ChEBI" id="CHEBI:30616"/>
        <dbReference type="ChEBI" id="CHEBI:57930"/>
        <dbReference type="ChEBI" id="CHEBI:61557"/>
        <dbReference type="ChEBI" id="CHEBI:456216"/>
        <dbReference type="EC" id="2.7.4.6"/>
    </reaction>
</comment>
<comment type="cofactor">
    <cofactor evidence="1">
        <name>Mg(2+)</name>
        <dbReference type="ChEBI" id="CHEBI:18420"/>
    </cofactor>
</comment>
<comment type="subunit">
    <text evidence="1">Homotetramer.</text>
</comment>
<comment type="subcellular location">
    <subcellularLocation>
        <location evidence="1">Cytoplasm</location>
    </subcellularLocation>
</comment>
<comment type="similarity">
    <text evidence="1">Belongs to the NDK family.</text>
</comment>
<proteinExistence type="inferred from homology"/>